<gene>
    <name type="ordered locus">Bmul_2524</name>
    <name type="ordered locus">BMULJ_00714</name>
</gene>
<dbReference type="EMBL" id="CP000868">
    <property type="protein sequence ID" value="ABX16208.1"/>
    <property type="molecule type" value="Genomic_DNA"/>
</dbReference>
<dbReference type="EMBL" id="AP009385">
    <property type="protein sequence ID" value="BAG42677.1"/>
    <property type="molecule type" value="Genomic_DNA"/>
</dbReference>
<dbReference type="RefSeq" id="WP_006400969.1">
    <property type="nucleotide sequence ID" value="NC_010804.1"/>
</dbReference>
<dbReference type="SMR" id="A9AFI7"/>
<dbReference type="STRING" id="395019.BMULJ_00714"/>
<dbReference type="KEGG" id="bmj:BMULJ_00714"/>
<dbReference type="KEGG" id="bmu:Bmul_2524"/>
<dbReference type="eggNOG" id="COG1678">
    <property type="taxonomic scope" value="Bacteria"/>
</dbReference>
<dbReference type="HOGENOM" id="CLU_057596_1_0_4"/>
<dbReference type="Proteomes" id="UP000008815">
    <property type="component" value="Chromosome 1"/>
</dbReference>
<dbReference type="GO" id="GO:0005829">
    <property type="term" value="C:cytosol"/>
    <property type="evidence" value="ECO:0007669"/>
    <property type="project" value="TreeGrafter"/>
</dbReference>
<dbReference type="Gene3D" id="3.40.1740.10">
    <property type="entry name" value="VC0467-like"/>
    <property type="match status" value="1"/>
</dbReference>
<dbReference type="HAMAP" id="MF_00758">
    <property type="entry name" value="UPF0301"/>
    <property type="match status" value="1"/>
</dbReference>
<dbReference type="InterPro" id="IPR003774">
    <property type="entry name" value="AlgH-like"/>
</dbReference>
<dbReference type="NCBIfam" id="NF001266">
    <property type="entry name" value="PRK00228.1-1"/>
    <property type="match status" value="1"/>
</dbReference>
<dbReference type="NCBIfam" id="NF001267">
    <property type="entry name" value="PRK00228.1-2"/>
    <property type="match status" value="1"/>
</dbReference>
<dbReference type="PANTHER" id="PTHR30327">
    <property type="entry name" value="UNCHARACTERIZED PROTEIN YQGE"/>
    <property type="match status" value="1"/>
</dbReference>
<dbReference type="PANTHER" id="PTHR30327:SF1">
    <property type="entry name" value="UPF0301 PROTEIN YQGE"/>
    <property type="match status" value="1"/>
</dbReference>
<dbReference type="Pfam" id="PF02622">
    <property type="entry name" value="DUF179"/>
    <property type="match status" value="1"/>
</dbReference>
<dbReference type="SUPFAM" id="SSF143456">
    <property type="entry name" value="VC0467-like"/>
    <property type="match status" value="1"/>
</dbReference>
<keyword id="KW-1185">Reference proteome</keyword>
<comment type="similarity">
    <text evidence="1">Belongs to the UPF0301 (AlgH) family.</text>
</comment>
<sequence>MSKPSDRINLTNQFLIAMPNMADPTFSGTVVYLCDHSERGALGLVINRPTDIDLESLFNRIDLKLEIEPLLHIPVYFGGPVQTERGFVLHEPVEGANYSSSMSVEGGLEMTTSKDVLEAVATGTGPKRFLLTLGHAGWGAGQLEEEISRNGWLTVAADPRIVFDTPAEERFEAALGLLGVSSSTLSGEAGHA</sequence>
<proteinExistence type="inferred from homology"/>
<reference key="1">
    <citation type="submission" date="2007-10" db="EMBL/GenBank/DDBJ databases">
        <title>Complete sequence of chromosome 1 of Burkholderia multivorans ATCC 17616.</title>
        <authorList>
            <person name="Copeland A."/>
            <person name="Lucas S."/>
            <person name="Lapidus A."/>
            <person name="Barry K."/>
            <person name="Glavina del Rio T."/>
            <person name="Dalin E."/>
            <person name="Tice H."/>
            <person name="Pitluck S."/>
            <person name="Chain P."/>
            <person name="Malfatti S."/>
            <person name="Shin M."/>
            <person name="Vergez L."/>
            <person name="Schmutz J."/>
            <person name="Larimer F."/>
            <person name="Land M."/>
            <person name="Hauser L."/>
            <person name="Kyrpides N."/>
            <person name="Kim E."/>
            <person name="Tiedje J."/>
            <person name="Richardson P."/>
        </authorList>
    </citation>
    <scope>NUCLEOTIDE SEQUENCE [LARGE SCALE GENOMIC DNA]</scope>
    <source>
        <strain>ATCC 17616 / 249</strain>
    </source>
</reference>
<reference key="2">
    <citation type="submission" date="2007-04" db="EMBL/GenBank/DDBJ databases">
        <title>Complete genome sequence of Burkholderia multivorans ATCC 17616.</title>
        <authorList>
            <person name="Ohtsubo Y."/>
            <person name="Yamashita A."/>
            <person name="Kurokawa K."/>
            <person name="Takami H."/>
            <person name="Yuhara S."/>
            <person name="Nishiyama E."/>
            <person name="Endo R."/>
            <person name="Miyazaki R."/>
            <person name="Ono A."/>
            <person name="Yano K."/>
            <person name="Ito M."/>
            <person name="Sota M."/>
            <person name="Yuji N."/>
            <person name="Hattori M."/>
            <person name="Tsuda M."/>
        </authorList>
    </citation>
    <scope>NUCLEOTIDE SEQUENCE [LARGE SCALE GENOMIC DNA]</scope>
    <source>
        <strain>ATCC 17616 / 249</strain>
    </source>
</reference>
<protein>
    <recommendedName>
        <fullName evidence="1">UPF0301 protein Bmul_2524/BMULJ_00714</fullName>
    </recommendedName>
</protein>
<evidence type="ECO:0000255" key="1">
    <source>
        <dbReference type="HAMAP-Rule" id="MF_00758"/>
    </source>
</evidence>
<feature type="chain" id="PRO_1000198258" description="UPF0301 protein Bmul_2524/BMULJ_00714">
    <location>
        <begin position="1"/>
        <end position="192"/>
    </location>
</feature>
<accession>A9AFI7</accession>
<organism>
    <name type="scientific">Burkholderia multivorans (strain ATCC 17616 / 249)</name>
    <dbReference type="NCBI Taxonomy" id="395019"/>
    <lineage>
        <taxon>Bacteria</taxon>
        <taxon>Pseudomonadati</taxon>
        <taxon>Pseudomonadota</taxon>
        <taxon>Betaproteobacteria</taxon>
        <taxon>Burkholderiales</taxon>
        <taxon>Burkholderiaceae</taxon>
        <taxon>Burkholderia</taxon>
        <taxon>Burkholderia cepacia complex</taxon>
    </lineage>
</organism>
<name>Y714_BURM1</name>